<proteinExistence type="evidence at protein level"/>
<organismHost>
    <name type="scientific">Escherichia coli</name>
    <dbReference type="NCBI Taxonomy" id="562"/>
</organismHost>
<gene>
    <name evidence="9" type="primary">N4</name>
    <name type="ORF">ORF134</name>
    <name evidence="9" type="ORF">T5.145</name>
    <name evidence="10" type="ORF">T5p141</name>
</gene>
<keyword id="KW-0002">3D-structure</keyword>
<keyword id="KW-0426">Late protein</keyword>
<keyword id="KW-1185">Reference proteome</keyword>
<keyword id="KW-1171">Viral genome ejection through host cell envelope</keyword>
<keyword id="KW-1243">Viral long flexible tail ejection system</keyword>
<keyword id="KW-1162">Viral penetration into host cytoplasm</keyword>
<keyword id="KW-1227">Viral tail protein</keyword>
<keyword id="KW-1228">Viral tail tube protein</keyword>
<keyword id="KW-0946">Virion</keyword>
<keyword id="KW-1160">Virus entry into host cell</keyword>
<feature type="chain" id="PRO_0000432944" description="Tail tube protein pb6">
    <location>
        <begin position="1"/>
        <end position="464"/>
    </location>
</feature>
<feature type="domain" description="BIG2" evidence="3">
    <location>
        <begin position="375"/>
        <end position="453"/>
    </location>
</feature>
<feature type="region of interest" description="Disordered" evidence="1">
    <location>
        <begin position="40"/>
        <end position="59"/>
    </location>
</feature>
<feature type="strand" evidence="16">
    <location>
        <begin position="9"/>
        <end position="15"/>
    </location>
</feature>
<feature type="strand" evidence="16">
    <location>
        <begin position="17"/>
        <end position="19"/>
    </location>
</feature>
<feature type="turn" evidence="16">
    <location>
        <begin position="22"/>
        <end position="24"/>
    </location>
</feature>
<feature type="strand" evidence="16">
    <location>
        <begin position="25"/>
        <end position="28"/>
    </location>
</feature>
<feature type="strand" evidence="16">
    <location>
        <begin position="34"/>
        <end position="37"/>
    </location>
</feature>
<feature type="strand" evidence="16">
    <location>
        <begin position="44"/>
        <end position="47"/>
    </location>
</feature>
<feature type="strand" evidence="16">
    <location>
        <begin position="68"/>
        <end position="75"/>
    </location>
</feature>
<feature type="turn" evidence="16">
    <location>
        <begin position="82"/>
        <end position="84"/>
    </location>
</feature>
<feature type="helix" evidence="16">
    <location>
        <begin position="92"/>
        <end position="99"/>
    </location>
</feature>
<feature type="strand" evidence="16">
    <location>
        <begin position="108"/>
        <end position="114"/>
    </location>
</feature>
<feature type="strand" evidence="16">
    <location>
        <begin position="119"/>
        <end position="122"/>
    </location>
</feature>
<feature type="strand" evidence="16">
    <location>
        <begin position="128"/>
        <end position="130"/>
    </location>
</feature>
<feature type="strand" evidence="16">
    <location>
        <begin position="134"/>
        <end position="140"/>
    </location>
</feature>
<feature type="strand" evidence="16">
    <location>
        <begin position="143"/>
        <end position="158"/>
    </location>
</feature>
<feature type="strand" evidence="16">
    <location>
        <begin position="166"/>
        <end position="181"/>
    </location>
</feature>
<feature type="helix" evidence="16">
    <location>
        <begin position="186"/>
        <end position="189"/>
    </location>
</feature>
<feature type="helix" evidence="16">
    <location>
        <begin position="193"/>
        <end position="200"/>
    </location>
</feature>
<feature type="strand" evidence="16">
    <location>
        <begin position="209"/>
        <end position="215"/>
    </location>
</feature>
<feature type="turn" evidence="16">
    <location>
        <begin position="216"/>
        <end position="219"/>
    </location>
</feature>
<feature type="strand" evidence="16">
    <location>
        <begin position="220"/>
        <end position="234"/>
    </location>
</feature>
<feature type="strand" evidence="16">
    <location>
        <begin position="253"/>
        <end position="255"/>
    </location>
</feature>
<feature type="strand" evidence="16">
    <location>
        <begin position="260"/>
        <end position="267"/>
    </location>
</feature>
<feature type="helix" evidence="16">
    <location>
        <begin position="271"/>
        <end position="274"/>
    </location>
</feature>
<feature type="helix" evidence="16">
    <location>
        <begin position="277"/>
        <end position="289"/>
    </location>
</feature>
<feature type="strand" evidence="16">
    <location>
        <begin position="292"/>
        <end position="299"/>
    </location>
</feature>
<feature type="strand" evidence="16">
    <location>
        <begin position="307"/>
        <end position="320"/>
    </location>
</feature>
<feature type="turn" evidence="16">
    <location>
        <begin position="322"/>
        <end position="325"/>
    </location>
</feature>
<feature type="strand" evidence="16">
    <location>
        <begin position="332"/>
        <end position="338"/>
    </location>
</feature>
<feature type="strand" evidence="16">
    <location>
        <begin position="350"/>
        <end position="357"/>
    </location>
</feature>
<feature type="helix" evidence="16">
    <location>
        <begin position="359"/>
        <end position="368"/>
    </location>
</feature>
<feature type="strand" evidence="16">
    <location>
        <begin position="378"/>
        <end position="383"/>
    </location>
</feature>
<feature type="helix" evidence="16">
    <location>
        <begin position="384"/>
        <end position="386"/>
    </location>
</feature>
<feature type="strand" evidence="16">
    <location>
        <begin position="388"/>
        <end position="391"/>
    </location>
</feature>
<feature type="strand" evidence="16">
    <location>
        <begin position="395"/>
        <end position="403"/>
    </location>
</feature>
<feature type="strand" evidence="16">
    <location>
        <begin position="412"/>
        <end position="418"/>
    </location>
</feature>
<feature type="strand" evidence="16">
    <location>
        <begin position="420"/>
        <end position="424"/>
    </location>
</feature>
<feature type="strand" evidence="16">
    <location>
        <begin position="429"/>
        <end position="432"/>
    </location>
</feature>
<feature type="strand" evidence="16">
    <location>
        <begin position="438"/>
        <end position="450"/>
    </location>
</feature>
<feature type="strand" evidence="16">
    <location>
        <begin position="453"/>
        <end position="461"/>
    </location>
</feature>
<name>TUBE_BPT5</name>
<sequence length="464" mass="50414">MSLQLLRNTRIFVSTVKTGHNKTNTQEILVQDDISWGQDSNSTDITVNEAGPRPTRGSKRFNDSLNAAEWSFSTYILPYKDKNTSKQIVPDYMLWHALSSGRAINLEGTTGAHNNATNFMVNFKDNSYHELAMLHIYILTDKTWSYIDSCQINQAEVNVDIEDIGRVTWSGNGNQLIPLDEQPFDPDQIGIDDETYMTIQGSYIKNKLTILKIKDMDTNKSYDIPITGGTFTINNNITYLTPNVMSRVTIPIGSFTGAFELTGSLTAYLNDKSLGSMELYKDLIKTLKVVNRFEIALVLGGEYDDERPAAILVAKQAHVNIPTIETDDVLGTSVEFKAIPSDLDAGDEGYLGFSSKYTRTTINNLIVNGDGATDAVTAITVKSAGNVTTLNRSATLQMSVEVTPSSARNKEVTWAITAGDAATINATGLLRADASKTGAVTVEATAKDGSGVKGTKVITVTAGG</sequence>
<organism>
    <name type="scientific">Escherichia phage T5</name>
    <name type="common">Enterobacteria phage T5</name>
    <dbReference type="NCBI Taxonomy" id="2695836"/>
    <lineage>
        <taxon>Viruses</taxon>
        <taxon>Duplodnaviria</taxon>
        <taxon>Heunggongvirae</taxon>
        <taxon>Uroviricota</taxon>
        <taxon>Caudoviricetes</taxon>
        <taxon>Demerecviridae</taxon>
        <taxon>Markadamsvirinae</taxon>
        <taxon>Tequintavirus</taxon>
        <taxon>Tequintavirus T5</taxon>
    </lineage>
</organism>
<dbReference type="EMBL" id="AY543070">
    <property type="protein sequence ID" value="AAS77184.1"/>
    <property type="molecule type" value="Genomic_DNA"/>
</dbReference>
<dbReference type="EMBL" id="AY692264">
    <property type="protein sequence ID" value="AAU05280.1"/>
    <property type="molecule type" value="Genomic_DNA"/>
</dbReference>
<dbReference type="EMBL" id="AY587007">
    <property type="protein sequence ID" value="AAX12071.1"/>
    <property type="molecule type" value="Genomic_DNA"/>
</dbReference>
<dbReference type="RefSeq" id="YP_006973.1">
    <property type="nucleotide sequence ID" value="NC_005859.1"/>
</dbReference>
<dbReference type="PDB" id="5NGJ">
    <property type="method" value="X-ray"/>
    <property type="resolution" value="2.20 A"/>
    <property type="chains" value="A/B=1-464"/>
</dbReference>
<dbReference type="PDB" id="7QG9">
    <property type="method" value="EM"/>
    <property type="resolution" value="3.45 A"/>
    <property type="chains" value="A/B/C/D/E/F=1-464"/>
</dbReference>
<dbReference type="PDB" id="7ZHJ">
    <property type="method" value="EM"/>
    <property type="resolution" value="3.53 A"/>
    <property type="chains" value="A/B/C/D/E/F=1-464"/>
</dbReference>
<dbReference type="PDB" id="7ZN2">
    <property type="method" value="EM"/>
    <property type="resolution" value="4.29 A"/>
    <property type="chains" value="A/B/C/D/E/F=1-464"/>
</dbReference>
<dbReference type="PDB" id="7ZQB">
    <property type="method" value="EM"/>
    <property type="resolution" value="3.88 A"/>
    <property type="chains" value="A/B/C/D/E/F=1-464"/>
</dbReference>
<dbReference type="PDB" id="8BCP">
    <property type="method" value="EM"/>
    <property type="resolution" value="3.88 A"/>
    <property type="chains" value="G/H/I=1-464"/>
</dbReference>
<dbReference type="PDB" id="8BCU">
    <property type="method" value="EM"/>
    <property type="resolution" value="4.05 A"/>
    <property type="chains" value="G/H/I=1-464"/>
</dbReference>
<dbReference type="PDB" id="9INY">
    <property type="method" value="EM"/>
    <property type="resolution" value="3.60 A"/>
    <property type="chains" value="A/B/C=1-464"/>
</dbReference>
<dbReference type="PDBsum" id="5NGJ"/>
<dbReference type="PDBsum" id="7QG9"/>
<dbReference type="PDBsum" id="7ZHJ"/>
<dbReference type="PDBsum" id="7ZN2"/>
<dbReference type="PDBsum" id="7ZQB"/>
<dbReference type="PDBsum" id="8BCP"/>
<dbReference type="PDBsum" id="8BCU"/>
<dbReference type="PDBsum" id="9INY"/>
<dbReference type="EMDB" id="EMD-13953"/>
<dbReference type="EMDB" id="EMD-14733"/>
<dbReference type="EMDB" id="EMD-14799"/>
<dbReference type="EMDB" id="EMD-14869"/>
<dbReference type="EMDB" id="EMD-15967"/>
<dbReference type="EMDB" id="EMD-15968"/>
<dbReference type="EMDB" id="EMD-60712"/>
<dbReference type="SMR" id="Q6QGE2"/>
<dbReference type="GeneID" id="2777634"/>
<dbReference type="KEGG" id="vg:2777634"/>
<dbReference type="Proteomes" id="UP000002107">
    <property type="component" value="Genome"/>
</dbReference>
<dbReference type="Proteomes" id="UP000002141">
    <property type="component" value="Segment"/>
</dbReference>
<dbReference type="Proteomes" id="UP000002503">
    <property type="component" value="Segment"/>
</dbReference>
<dbReference type="GO" id="GO:0098015">
    <property type="term" value="C:virus tail"/>
    <property type="evidence" value="ECO:0000314"/>
    <property type="project" value="UniProtKB"/>
</dbReference>
<dbReference type="GO" id="GO:0098026">
    <property type="term" value="C:virus tail, tube"/>
    <property type="evidence" value="ECO:0007669"/>
    <property type="project" value="UniProtKB-KW"/>
</dbReference>
<dbReference type="GO" id="GO:0099001">
    <property type="term" value="P:symbiont genome ejection through host cell envelope, long flexible tail mechanism"/>
    <property type="evidence" value="ECO:0007669"/>
    <property type="project" value="UniProtKB-KW"/>
</dbReference>
<dbReference type="GO" id="GO:0044659">
    <property type="term" value="P:viral release from host cell by cytolysis"/>
    <property type="evidence" value="ECO:0000315"/>
    <property type="project" value="CACAO"/>
</dbReference>
<dbReference type="Gene3D" id="2.60.40.1080">
    <property type="match status" value="1"/>
</dbReference>
<dbReference type="InterPro" id="IPR003343">
    <property type="entry name" value="Big_2"/>
</dbReference>
<dbReference type="InterPro" id="IPR008964">
    <property type="entry name" value="Invasin/intimin_cell_adhesion"/>
</dbReference>
<dbReference type="Pfam" id="PF02368">
    <property type="entry name" value="Big_2"/>
    <property type="match status" value="1"/>
</dbReference>
<dbReference type="SMART" id="SM00635">
    <property type="entry name" value="BID_2"/>
    <property type="match status" value="1"/>
</dbReference>
<dbReference type="SUPFAM" id="SSF49373">
    <property type="entry name" value="Invasin/intimin cell-adhesion fragments"/>
    <property type="match status" value="1"/>
</dbReference>
<accession>Q6QGE2</accession>
<evidence type="ECO:0000256" key="1">
    <source>
        <dbReference type="SAM" id="MobiDB-lite"/>
    </source>
</evidence>
<evidence type="ECO:0000269" key="2">
    <source>
    </source>
</evidence>
<evidence type="ECO:0000269" key="3">
    <source>
    </source>
</evidence>
<evidence type="ECO:0000269" key="4">
    <source>
    </source>
</evidence>
<evidence type="ECO:0000303" key="5">
    <source>
    </source>
</evidence>
<evidence type="ECO:0000305" key="6">
    <source>
    </source>
</evidence>
<evidence type="ECO:0000305" key="7">
    <source>
    </source>
</evidence>
<evidence type="ECO:0000305" key="8">
    <source>
    </source>
</evidence>
<evidence type="ECO:0000312" key="9">
    <source>
        <dbReference type="EMBL" id="AAS77184.1"/>
    </source>
</evidence>
<evidence type="ECO:0000312" key="10">
    <source>
        <dbReference type="EMBL" id="AAU05280.1"/>
    </source>
</evidence>
<evidence type="ECO:0000312" key="11">
    <source>
        <dbReference type="EMBL" id="AAX12071.1"/>
    </source>
</evidence>
<evidence type="ECO:0007744" key="12">
    <source>
        <dbReference type="PDB" id="5NGJ"/>
    </source>
</evidence>
<evidence type="ECO:0007744" key="13">
    <source>
        <dbReference type="PDB" id="7QG9"/>
    </source>
</evidence>
<evidence type="ECO:0007744" key="14">
    <source>
        <dbReference type="PDB" id="7ZHJ"/>
    </source>
</evidence>
<evidence type="ECO:0007744" key="15">
    <source>
        <dbReference type="PDB" id="7ZN2"/>
    </source>
</evidence>
<evidence type="ECO:0007829" key="16">
    <source>
        <dbReference type="PDB" id="5NGJ"/>
    </source>
</evidence>
<protein>
    <recommendedName>
        <fullName evidence="5">Tail tube protein pb6</fullName>
        <shortName evidence="5">TTP-pb6</shortName>
    </recommendedName>
    <alternativeName>
        <fullName evidence="5">Major tail protein pb6</fullName>
        <shortName evidence="5">MTP pb6</shortName>
    </alternativeName>
    <alternativeName>
        <fullName evidence="5">Tail protein pb6</fullName>
    </alternativeName>
</protein>
<reference key="1">
    <citation type="submission" date="2004-01" db="EMBL/GenBank/DDBJ databases">
        <title>Bacteriophage T5 complete genome.</title>
        <authorList>
            <person name="Ksenzenko V.N."/>
            <person name="Kaliman A.V."/>
            <person name="Krutilina A.I."/>
            <person name="Shlyapnikov M.G."/>
        </authorList>
    </citation>
    <scope>NUCLEOTIDE SEQUENCE [LARGE SCALE GENOMIC DNA]</scope>
</reference>
<reference key="2">
    <citation type="journal article" date="2005" name="Virology">
        <title>Complete genome sequence of bacteriophage T5.</title>
        <authorList>
            <person name="Wang J."/>
            <person name="Jiang Y."/>
            <person name="Vincent M."/>
            <person name="Sun Y."/>
            <person name="Yu H."/>
            <person name="Wang J."/>
            <person name="Bao Q."/>
            <person name="Kong H."/>
            <person name="Hu S."/>
        </authorList>
    </citation>
    <scope>NUCLEOTIDE SEQUENCE [LARGE SCALE GENOMIC DNA]</scope>
    <scope>INDUCTION</scope>
    <source>
        <strain evidence="11">ATCC 11303-B5</strain>
    </source>
</reference>
<reference key="3">
    <citation type="journal article" date="2014" name="J. Virol.">
        <title>Insights into bacteriophage T5 structure from analysis of its morphogenesis genes and protein components.</title>
        <authorList>
            <person name="Zivanovic Y."/>
            <person name="Confalonieri F."/>
            <person name="Ponchon L."/>
            <person name="Lurz R."/>
            <person name="Chami M."/>
            <person name="Flayhan A."/>
            <person name="Renouard M."/>
            <person name="Huet A."/>
            <person name="Decottignies P."/>
            <person name="Davidson A.R."/>
            <person name="Breyton C."/>
            <person name="Boulanger P."/>
        </authorList>
    </citation>
    <scope>NUCLEOTIDE SEQUENCE [LARGE SCALE GENOMIC DNA]</scope>
    <scope>SUBCELLULAR LOCATION</scope>
    <scope>FUNCTION</scope>
    <source>
        <strain>St0 deletion mutant</strain>
    </source>
</reference>
<reference key="4">
    <citation type="journal article" date="2006" name="J. Mol. Biol.">
        <title>Bacteriophage T5 structure reveals similarities with HK97 and T4 suggesting evolutionary relationships.</title>
        <authorList>
            <person name="Effantin G."/>
            <person name="Boulanger P."/>
            <person name="Neumann E."/>
            <person name="Letellier L."/>
            <person name="Conway J.F."/>
        </authorList>
    </citation>
    <scope>FUNCTION</scope>
    <scope>SUBUNIT</scope>
</reference>
<reference evidence="12" key="5">
    <citation type="journal article" date="2017" name="Nat. Commun.">
        <title>Bacteriophage T5 tail tube structure suggests a trigger mechanism for Siphoviridae DNA ejection.</title>
        <authorList>
            <person name="Arnaud C.A."/>
            <person name="Effantin G."/>
            <person name="Vives C."/>
            <person name="Engilberge S."/>
            <person name="Bacia M."/>
            <person name="Boulanger P."/>
            <person name="Girard E."/>
            <person name="Schoehn G."/>
            <person name="Breyton C."/>
        </authorList>
    </citation>
    <scope>X-RAY CRYSTALLOGRAPHY (2.20 ANGSTROMS)</scope>
    <scope>SUBUNIT</scope>
    <scope>STRUCTURE BY ELECTRON MICROSCOPY (6.0 ANGSTROMS) OF THE TAIL TUBE</scope>
    <scope>DOMAIN</scope>
    <scope>FUNCTION</scope>
</reference>
<reference evidence="13 14 15" key="6">
    <citation type="journal article" date="2023" name="Sci. Adv.">
        <title>Structural basis of bacteriophage T5 infection trigger and E. coli cell wall perforation.</title>
        <authorList>
            <person name="Linares R."/>
            <person name="Arnaud C.A."/>
            <person name="Effantin G."/>
            <person name="Darnault C."/>
            <person name="Epalle N.H."/>
            <person name="Boeri Erba E."/>
            <person name="Schoehn G."/>
            <person name="Breyton C."/>
        </authorList>
    </citation>
    <scope>STRUCTURE BY ELECTRON MICROSCOPY (3.45 ANGSTROMS)</scope>
    <scope>FUNCTION</scope>
    <scope>SUBCELLULAR LOCATION</scope>
    <scope>SUBUNIT</scope>
    <scope>INTERACTION WITH BASEPLATE TUBE PROTEIN P140</scope>
</reference>
<comment type="function">
    <text evidence="3 4 6 7 8">Polymerizes to form the tail tube of the phage (PubMed:29209037, PubMed:36961893). Tail tube protein polymerization takes place around the tape measure protein (TMP-pb2) and is probably directed by chaperone proteins (Probable). The tail tube is involved in viral genome delivery during ejection (Probable).</text>
</comment>
<comment type="subunit">
    <text evidence="2 3 4">Homotrimer (PubMed:16876823, PubMed:29209037, PubMed:36961893). The tail tube is made of 40 stacked trimeric rings (PubMed:36961893). Interacts with baseplate tube protein p140 (PubMed:36961893).</text>
</comment>
<comment type="subcellular location">
    <subcellularLocation>
        <location evidence="4 7">Virion</location>
    </subcellularLocation>
    <text evidence="4 7">Main component of the tail tube, which is made of 40 stacked TTP-pb6 trimers.</text>
</comment>
<comment type="domain">
    <text evidence="3">The C-terminus possesses an Ig-like fold of the Big-2 family.</text>
</comment>